<dbReference type="EMBL" id="AE005674">
    <property type="protein sequence ID" value="AAN45631.2"/>
    <property type="status" value="ALT_INIT"/>
    <property type="molecule type" value="Genomic_DNA"/>
</dbReference>
<dbReference type="EMBL" id="AE014073">
    <property type="protein sequence ID" value="AAP19417.1"/>
    <property type="status" value="ALT_INIT"/>
    <property type="molecule type" value="Genomic_DNA"/>
</dbReference>
<dbReference type="RefSeq" id="WP_001295734.1">
    <property type="nucleotide sequence ID" value="NZ_WPGW01000210.1"/>
</dbReference>
<dbReference type="SMR" id="P69858"/>
<dbReference type="STRING" id="198214.SF4211"/>
<dbReference type="PaxDb" id="198214-SF4211"/>
<dbReference type="GeneID" id="93777530"/>
<dbReference type="KEGG" id="sfx:S4468"/>
<dbReference type="PATRIC" id="fig|623.156.peg.2789"/>
<dbReference type="HOGENOM" id="CLU_081853_2_0_6"/>
<dbReference type="Proteomes" id="UP000001006">
    <property type="component" value="Chromosome"/>
</dbReference>
<dbReference type="Proteomes" id="UP000002673">
    <property type="component" value="Chromosome"/>
</dbReference>
<dbReference type="GO" id="GO:0009279">
    <property type="term" value="C:cell outer membrane"/>
    <property type="evidence" value="ECO:0007669"/>
    <property type="project" value="UniProtKB-SubCell"/>
</dbReference>
<dbReference type="GO" id="GO:0046930">
    <property type="term" value="C:pore complex"/>
    <property type="evidence" value="ECO:0007669"/>
    <property type="project" value="UniProtKB-KW"/>
</dbReference>
<dbReference type="GO" id="GO:0015288">
    <property type="term" value="F:porin activity"/>
    <property type="evidence" value="ECO:0007669"/>
    <property type="project" value="UniProtKB-KW"/>
</dbReference>
<dbReference type="GO" id="GO:0006811">
    <property type="term" value="P:monoatomic ion transport"/>
    <property type="evidence" value="ECO:0007669"/>
    <property type="project" value="UniProtKB-KW"/>
</dbReference>
<dbReference type="GO" id="GO:0015772">
    <property type="term" value="P:oligosaccharide transport"/>
    <property type="evidence" value="ECO:0007669"/>
    <property type="project" value="TreeGrafter"/>
</dbReference>
<dbReference type="FunFam" id="2.40.160.40:FF:000002">
    <property type="entry name" value="N-acetylneuraminic acid outer membrane channel protein NanC"/>
    <property type="match status" value="1"/>
</dbReference>
<dbReference type="Gene3D" id="2.40.160.40">
    <property type="entry name" value="monomeric porin ompg"/>
    <property type="match status" value="1"/>
</dbReference>
<dbReference type="InterPro" id="IPR053713">
    <property type="entry name" value="Bact_OM_Channel_sf"/>
</dbReference>
<dbReference type="InterPro" id="IPR009331">
    <property type="entry name" value="Oligogalacturonate-sp_porin"/>
</dbReference>
<dbReference type="PANTHER" id="PTHR38105:SF2">
    <property type="entry name" value="N-ACETYLNEURAMINIC ACID OUTER MEMBRANE CHANNEL PROTEIN NANC-RELATED"/>
    <property type="match status" value="1"/>
</dbReference>
<dbReference type="PANTHER" id="PTHR38105">
    <property type="entry name" value="OUTER MEMBRANE PROTEIN-RELATED-RELATED"/>
    <property type="match status" value="1"/>
</dbReference>
<dbReference type="Pfam" id="PF06178">
    <property type="entry name" value="KdgM"/>
    <property type="match status" value="1"/>
</dbReference>
<comment type="function">
    <text evidence="1">Outer membrane channel protein allowing the entry of N-acetylneuraminic acid (Neu5Ac, the most abundant sialic acid on host cell surfaces) into the bacteria. NanC proteins form high-conductance channels which are open at low membrane potentials and which have a weak anion selectivity.</text>
</comment>
<comment type="catalytic activity">
    <reaction evidence="1">
        <text>N-acetylneuraminate(in) = N-acetylneuraminate(out)</text>
        <dbReference type="Rhea" id="RHEA:28991"/>
        <dbReference type="ChEBI" id="CHEBI:35418"/>
    </reaction>
</comment>
<comment type="subunit">
    <text evidence="1">Monomer.</text>
</comment>
<comment type="subcellular location">
    <subcellularLocation>
        <location evidence="1">Cell outer membrane</location>
        <topology evidence="1">Multi-pass membrane protein</topology>
    </subcellularLocation>
</comment>
<comment type="similarity">
    <text evidence="3">Belongs to the oligogalacturonate-specific porin KdgM (TC 1.B.35) family. NanC subfamily.</text>
</comment>
<comment type="sequence caution" evidence="3">
    <conflict type="erroneous initiation">
        <sequence resource="EMBL-CDS" id="AAN45631"/>
    </conflict>
    <text>Truncated N-terminus.</text>
</comment>
<comment type="sequence caution" evidence="3">
    <conflict type="erroneous initiation">
        <sequence resource="EMBL-CDS" id="AAP19417"/>
    </conflict>
    <text>Truncated N-terminus.</text>
</comment>
<keyword id="KW-0998">Cell outer membrane</keyword>
<keyword id="KW-0406">Ion transport</keyword>
<keyword id="KW-0472">Membrane</keyword>
<keyword id="KW-0626">Porin</keyword>
<keyword id="KW-1185">Reference proteome</keyword>
<keyword id="KW-0732">Signal</keyword>
<keyword id="KW-0762">Sugar transport</keyword>
<keyword id="KW-0812">Transmembrane</keyword>
<keyword id="KW-1134">Transmembrane beta strand</keyword>
<keyword id="KW-0813">Transport</keyword>
<sequence>MKKAKILSGVLLLCFSSPLISQAATLDVRGGYRSGSHAYETRLKVSEGWQNGWWASMESNTWNTIHDNKKENAALNDVQVEVNYAIKLDDQWTVRPGMLTHFSSNGTRYGPYVKLSWDATKDLNFGIRYRYDWKAYRQQDLSGDMSRDNVHRWDGYVTYHINSDFTFAWQTTLYSKQNDYRYANHKKWATENAFVLQYHMTPDITPYIEYDYLDRQGVYNGRDNLSENSYRIGVSFKL</sequence>
<accession>P69858</accession>
<accession>P39372</accession>
<evidence type="ECO:0000250" key="1">
    <source>
        <dbReference type="UniProtKB" id="P69856"/>
    </source>
</evidence>
<evidence type="ECO:0000255" key="2"/>
<evidence type="ECO:0000305" key="3"/>
<reference key="1">
    <citation type="journal article" date="2002" name="Nucleic Acids Res.">
        <title>Genome sequence of Shigella flexneri 2a: insights into pathogenicity through comparison with genomes of Escherichia coli K12 and O157.</title>
        <authorList>
            <person name="Jin Q."/>
            <person name="Yuan Z."/>
            <person name="Xu J."/>
            <person name="Wang Y."/>
            <person name="Shen Y."/>
            <person name="Lu W."/>
            <person name="Wang J."/>
            <person name="Liu H."/>
            <person name="Yang J."/>
            <person name="Yang F."/>
            <person name="Zhang X."/>
            <person name="Zhang J."/>
            <person name="Yang G."/>
            <person name="Wu H."/>
            <person name="Qu D."/>
            <person name="Dong J."/>
            <person name="Sun L."/>
            <person name="Xue Y."/>
            <person name="Zhao A."/>
            <person name="Gao Y."/>
            <person name="Zhu J."/>
            <person name="Kan B."/>
            <person name="Ding K."/>
            <person name="Chen S."/>
            <person name="Cheng H."/>
            <person name="Yao Z."/>
            <person name="He B."/>
            <person name="Chen R."/>
            <person name="Ma D."/>
            <person name="Qiang B."/>
            <person name="Wen Y."/>
            <person name="Hou Y."/>
            <person name="Yu J."/>
        </authorList>
    </citation>
    <scope>NUCLEOTIDE SEQUENCE [LARGE SCALE GENOMIC DNA]</scope>
    <source>
        <strain>301 / Serotype 2a</strain>
    </source>
</reference>
<reference key="2">
    <citation type="journal article" date="2003" name="Infect. Immun.">
        <title>Complete genome sequence and comparative genomics of Shigella flexneri serotype 2a strain 2457T.</title>
        <authorList>
            <person name="Wei J."/>
            <person name="Goldberg M.B."/>
            <person name="Burland V."/>
            <person name="Venkatesan M.M."/>
            <person name="Deng W."/>
            <person name="Fournier G."/>
            <person name="Mayhew G.F."/>
            <person name="Plunkett G. III"/>
            <person name="Rose D.J."/>
            <person name="Darling A."/>
            <person name="Mau B."/>
            <person name="Perna N.T."/>
            <person name="Payne S.M."/>
            <person name="Runyen-Janecky L.J."/>
            <person name="Zhou S."/>
            <person name="Schwartz D.C."/>
            <person name="Blattner F.R."/>
        </authorList>
    </citation>
    <scope>NUCLEOTIDE SEQUENCE [LARGE SCALE GENOMIC DNA]</scope>
    <source>
        <strain>ATCC 700930 / 2457T / Serotype 2a</strain>
    </source>
</reference>
<proteinExistence type="inferred from homology"/>
<gene>
    <name type="primary">nanC</name>
    <name type="ordered locus">SF4211</name>
    <name type="ordered locus">S4468</name>
</gene>
<protein>
    <recommendedName>
        <fullName evidence="1">N-acetylneuraminic acid outer membrane channel protein NanC</fullName>
        <shortName evidence="1">Porin NanC</shortName>
    </recommendedName>
</protein>
<feature type="signal peptide" evidence="2">
    <location>
        <begin position="1"/>
        <end position="23"/>
    </location>
</feature>
<feature type="chain" id="PRO_0000016604" description="N-acetylneuraminic acid outer membrane channel protein NanC">
    <location>
        <begin position="24"/>
        <end position="238"/>
    </location>
</feature>
<feature type="topological domain" description="Periplasmic" evidence="1">
    <location>
        <begin position="24"/>
        <end position="25"/>
    </location>
</feature>
<feature type="transmembrane region" evidence="1">
    <location>
        <begin position="26"/>
        <end position="32"/>
    </location>
</feature>
<feature type="topological domain" description="Extracellular" evidence="1">
    <location>
        <begin position="33"/>
        <end position="39"/>
    </location>
</feature>
<feature type="transmembrane region" evidence="1">
    <location>
        <begin position="40"/>
        <end position="49"/>
    </location>
</feature>
<feature type="topological domain" description="Periplasmic" evidence="1">
    <location>
        <begin position="50"/>
        <end position="52"/>
    </location>
</feature>
<feature type="transmembrane region" evidence="1">
    <location>
        <begin position="53"/>
        <end position="61"/>
    </location>
</feature>
<feature type="topological domain" description="Extracellular" evidence="1">
    <location>
        <begin position="62"/>
        <end position="76"/>
    </location>
</feature>
<feature type="transmembrane region" evidence="1">
    <location>
        <begin position="77"/>
        <end position="86"/>
    </location>
</feature>
<feature type="topological domain" description="Periplasmic" evidence="1">
    <location>
        <begin position="87"/>
        <end position="91"/>
    </location>
</feature>
<feature type="transmembrane region" evidence="1">
    <location>
        <begin position="92"/>
        <end position="102"/>
    </location>
</feature>
<feature type="topological domain" description="Extracellular" evidence="1">
    <location>
        <begin position="103"/>
        <end position="107"/>
    </location>
</feature>
<feature type="transmembrane region" evidence="1">
    <location>
        <begin position="108"/>
        <end position="117"/>
    </location>
</feature>
<feature type="topological domain" description="Periplasmic" evidence="1">
    <location>
        <begin position="118"/>
        <end position="122"/>
    </location>
</feature>
<feature type="transmembrane region" evidence="1">
    <location>
        <begin position="123"/>
        <end position="132"/>
    </location>
</feature>
<feature type="topological domain" description="Extracellular" evidence="1">
    <location>
        <begin position="133"/>
        <end position="151"/>
    </location>
</feature>
<feature type="transmembrane region" evidence="1">
    <location>
        <begin position="152"/>
        <end position="159"/>
    </location>
</feature>
<feature type="topological domain" description="Periplasmic" evidence="1">
    <location>
        <begin position="160"/>
        <end position="164"/>
    </location>
</feature>
<feature type="transmembrane region" evidence="1">
    <location>
        <begin position="165"/>
        <end position="173"/>
    </location>
</feature>
<feature type="topological domain" description="Extracellular" evidence="1">
    <location>
        <begin position="174"/>
        <end position="190"/>
    </location>
</feature>
<feature type="transmembrane region" evidence="1">
    <location>
        <begin position="191"/>
        <end position="200"/>
    </location>
</feature>
<feature type="topological domain" description="Periplasmic" evidence="1">
    <location>
        <begin position="201"/>
        <end position="203"/>
    </location>
</feature>
<feature type="transmembrane region" evidence="1">
    <location>
        <begin position="204"/>
        <end position="212"/>
    </location>
</feature>
<feature type="topological domain" description="Extracellular" evidence="1">
    <location>
        <begin position="213"/>
        <end position="228"/>
    </location>
</feature>
<feature type="transmembrane region" evidence="1">
    <location>
        <begin position="229"/>
        <end position="236"/>
    </location>
</feature>
<feature type="topological domain" description="Periplasmic" evidence="1">
    <location>
        <begin position="237"/>
        <end position="238"/>
    </location>
</feature>
<organism>
    <name type="scientific">Shigella flexneri</name>
    <dbReference type="NCBI Taxonomy" id="623"/>
    <lineage>
        <taxon>Bacteria</taxon>
        <taxon>Pseudomonadati</taxon>
        <taxon>Pseudomonadota</taxon>
        <taxon>Gammaproteobacteria</taxon>
        <taxon>Enterobacterales</taxon>
        <taxon>Enterobacteriaceae</taxon>
        <taxon>Shigella</taxon>
    </lineage>
</organism>
<name>NANC_SHIFL</name>